<sequence length="169" mass="17967">MGDLSTTILAAEEGGGGNFLVPNGTFFFVLLIFLIVLGVIAKWVVPPISKVLQEREAMVTKTVEDNRKAADLFAAAQGDSQQVMAKARREASGIRDEARGEGRKILEDMRSRASAESAATLQKTNEELSRQGQQTAAELQSSIETLSATLASRVLGVDISSAAATSQGR</sequence>
<reference key="1">
    <citation type="submission" date="2007-02" db="EMBL/GenBank/DDBJ databases">
        <title>Complete sequence of Mycobacterium sp. JLS.</title>
        <authorList>
            <consortium name="US DOE Joint Genome Institute"/>
            <person name="Copeland A."/>
            <person name="Lucas S."/>
            <person name="Lapidus A."/>
            <person name="Barry K."/>
            <person name="Detter J.C."/>
            <person name="Glavina del Rio T."/>
            <person name="Hammon N."/>
            <person name="Israni S."/>
            <person name="Dalin E."/>
            <person name="Tice H."/>
            <person name="Pitluck S."/>
            <person name="Chain P."/>
            <person name="Malfatti S."/>
            <person name="Shin M."/>
            <person name="Vergez L."/>
            <person name="Schmutz J."/>
            <person name="Larimer F."/>
            <person name="Land M."/>
            <person name="Hauser L."/>
            <person name="Kyrpides N."/>
            <person name="Mikhailova N."/>
            <person name="Miller C.D."/>
            <person name="Anderson A.J."/>
            <person name="Sims R.C."/>
            <person name="Richardson P."/>
        </authorList>
    </citation>
    <scope>NUCLEOTIDE SEQUENCE [LARGE SCALE GENOMIC DNA]</scope>
    <source>
        <strain>JLS</strain>
    </source>
</reference>
<accession>A3Q3B5</accession>
<organism>
    <name type="scientific">Mycobacterium sp. (strain JLS)</name>
    <dbReference type="NCBI Taxonomy" id="164757"/>
    <lineage>
        <taxon>Bacteria</taxon>
        <taxon>Bacillati</taxon>
        <taxon>Actinomycetota</taxon>
        <taxon>Actinomycetes</taxon>
        <taxon>Mycobacteriales</taxon>
        <taxon>Mycobacteriaceae</taxon>
        <taxon>Mycobacterium</taxon>
    </lineage>
</organism>
<comment type="function">
    <text evidence="1">F(1)F(0) ATP synthase produces ATP from ADP in the presence of a proton or sodium gradient. F-type ATPases consist of two structural domains, F(1) containing the extramembraneous catalytic core and F(0) containing the membrane proton channel, linked together by a central stalk and a peripheral stalk. During catalysis, ATP synthesis in the catalytic domain of F(1) is coupled via a rotary mechanism of the central stalk subunits to proton translocation.</text>
</comment>
<comment type="function">
    <text evidence="1">Component of the F(0) channel, it forms part of the peripheral stalk, linking F(1) to F(0).</text>
</comment>
<comment type="subunit">
    <text evidence="1">F-type ATPases have 2 components, F(1) - the catalytic core - and F(0) - the membrane proton channel. F(1) has five subunits: alpha(3), beta(3), gamma(1), delta(1), epsilon(1). F(0) has three main subunits: a(1), b(2) and c(10-14). The alpha and beta chains form an alternating ring which encloses part of the gamma chain. F(1) is attached to F(0) by a central stalk formed by the gamma and epsilon chains, while a peripheral stalk is formed by the delta and b chains.</text>
</comment>
<comment type="subcellular location">
    <subcellularLocation>
        <location evidence="1">Cell membrane</location>
        <topology evidence="1">Single-pass membrane protein</topology>
    </subcellularLocation>
</comment>
<comment type="similarity">
    <text evidence="1">Belongs to the ATPase B chain family.</text>
</comment>
<dbReference type="EMBL" id="CP000580">
    <property type="protein sequence ID" value="ABN99642.1"/>
    <property type="molecule type" value="Genomic_DNA"/>
</dbReference>
<dbReference type="SMR" id="A3Q3B5"/>
<dbReference type="KEGG" id="mjl:Mjls_3866"/>
<dbReference type="HOGENOM" id="CLU_079215_5_2_11"/>
<dbReference type="BioCyc" id="MSP164757:G1G8C-3906-MONOMER"/>
<dbReference type="GO" id="GO:0005886">
    <property type="term" value="C:plasma membrane"/>
    <property type="evidence" value="ECO:0007669"/>
    <property type="project" value="UniProtKB-SubCell"/>
</dbReference>
<dbReference type="GO" id="GO:0045259">
    <property type="term" value="C:proton-transporting ATP synthase complex"/>
    <property type="evidence" value="ECO:0007669"/>
    <property type="project" value="UniProtKB-KW"/>
</dbReference>
<dbReference type="GO" id="GO:0046933">
    <property type="term" value="F:proton-transporting ATP synthase activity, rotational mechanism"/>
    <property type="evidence" value="ECO:0007669"/>
    <property type="project" value="UniProtKB-UniRule"/>
</dbReference>
<dbReference type="GO" id="GO:0046961">
    <property type="term" value="F:proton-transporting ATPase activity, rotational mechanism"/>
    <property type="evidence" value="ECO:0007669"/>
    <property type="project" value="TreeGrafter"/>
</dbReference>
<dbReference type="CDD" id="cd06503">
    <property type="entry name" value="ATP-synt_Fo_b"/>
    <property type="match status" value="1"/>
</dbReference>
<dbReference type="HAMAP" id="MF_01398">
    <property type="entry name" value="ATP_synth_b_bprime"/>
    <property type="match status" value="1"/>
</dbReference>
<dbReference type="InterPro" id="IPR028987">
    <property type="entry name" value="ATP_synth_B-like_membr_sf"/>
</dbReference>
<dbReference type="InterPro" id="IPR002146">
    <property type="entry name" value="ATP_synth_b/b'su_bac/chlpt"/>
</dbReference>
<dbReference type="InterPro" id="IPR005864">
    <property type="entry name" value="ATP_synth_F0_bsu_bac"/>
</dbReference>
<dbReference type="InterPro" id="IPR050059">
    <property type="entry name" value="ATP_synthase_B_chain"/>
</dbReference>
<dbReference type="NCBIfam" id="TIGR01144">
    <property type="entry name" value="ATP_synt_b"/>
    <property type="match status" value="1"/>
</dbReference>
<dbReference type="NCBIfam" id="NF004412">
    <property type="entry name" value="PRK05759.1-3"/>
    <property type="match status" value="1"/>
</dbReference>
<dbReference type="PANTHER" id="PTHR33445:SF1">
    <property type="entry name" value="ATP SYNTHASE SUBUNIT B"/>
    <property type="match status" value="1"/>
</dbReference>
<dbReference type="PANTHER" id="PTHR33445">
    <property type="entry name" value="ATP SYNTHASE SUBUNIT B', CHLOROPLASTIC"/>
    <property type="match status" value="1"/>
</dbReference>
<dbReference type="Pfam" id="PF00430">
    <property type="entry name" value="ATP-synt_B"/>
    <property type="match status" value="1"/>
</dbReference>
<dbReference type="SUPFAM" id="SSF81573">
    <property type="entry name" value="F1F0 ATP synthase subunit B, membrane domain"/>
    <property type="match status" value="1"/>
</dbReference>
<name>ATPF_MYCSJ</name>
<feature type="chain" id="PRO_0000368600" description="ATP synthase subunit b">
    <location>
        <begin position="1"/>
        <end position="169"/>
    </location>
</feature>
<feature type="transmembrane region" description="Helical" evidence="1">
    <location>
        <begin position="26"/>
        <end position="46"/>
    </location>
</feature>
<gene>
    <name evidence="1" type="primary">atpF</name>
    <name type="ordered locus">Mjls_3866</name>
</gene>
<keyword id="KW-0066">ATP synthesis</keyword>
<keyword id="KW-1003">Cell membrane</keyword>
<keyword id="KW-0138">CF(0)</keyword>
<keyword id="KW-0375">Hydrogen ion transport</keyword>
<keyword id="KW-0406">Ion transport</keyword>
<keyword id="KW-0472">Membrane</keyword>
<keyword id="KW-0812">Transmembrane</keyword>
<keyword id="KW-1133">Transmembrane helix</keyword>
<keyword id="KW-0813">Transport</keyword>
<proteinExistence type="inferred from homology"/>
<protein>
    <recommendedName>
        <fullName evidence="1">ATP synthase subunit b</fullName>
    </recommendedName>
    <alternativeName>
        <fullName evidence="1">ATP synthase F(0) sector subunit b</fullName>
    </alternativeName>
    <alternativeName>
        <fullName evidence="1">ATPase subunit I</fullName>
    </alternativeName>
    <alternativeName>
        <fullName evidence="1">F-type ATPase subunit b</fullName>
        <shortName evidence="1">F-ATPase subunit b</shortName>
    </alternativeName>
</protein>
<evidence type="ECO:0000255" key="1">
    <source>
        <dbReference type="HAMAP-Rule" id="MF_01398"/>
    </source>
</evidence>